<proteinExistence type="inferred from homology"/>
<name>RL30_XYLFT</name>
<reference key="1">
    <citation type="journal article" date="2003" name="J. Bacteriol.">
        <title>Comparative analyses of the complete genome sequences of Pierce's disease and citrus variegated chlorosis strains of Xylella fastidiosa.</title>
        <authorList>
            <person name="Van Sluys M.A."/>
            <person name="de Oliveira M.C."/>
            <person name="Monteiro-Vitorello C.B."/>
            <person name="Miyaki C.Y."/>
            <person name="Furlan L.R."/>
            <person name="Camargo L.E.A."/>
            <person name="da Silva A.C.R."/>
            <person name="Moon D.H."/>
            <person name="Takita M.A."/>
            <person name="Lemos E.G.M."/>
            <person name="Machado M.A."/>
            <person name="Ferro M.I.T."/>
            <person name="da Silva F.R."/>
            <person name="Goldman M.H.S."/>
            <person name="Goldman G.H."/>
            <person name="Lemos M.V.F."/>
            <person name="El-Dorry H."/>
            <person name="Tsai S.M."/>
            <person name="Carrer H."/>
            <person name="Carraro D.M."/>
            <person name="de Oliveira R.C."/>
            <person name="Nunes L.R."/>
            <person name="Siqueira W.J."/>
            <person name="Coutinho L.L."/>
            <person name="Kimura E.T."/>
            <person name="Ferro E.S."/>
            <person name="Harakava R."/>
            <person name="Kuramae E.E."/>
            <person name="Marino C.L."/>
            <person name="Giglioti E."/>
            <person name="Abreu I.L."/>
            <person name="Alves L.M.C."/>
            <person name="do Amaral A.M."/>
            <person name="Baia G.S."/>
            <person name="Blanco S.R."/>
            <person name="Brito M.S."/>
            <person name="Cannavan F.S."/>
            <person name="Celestino A.V."/>
            <person name="da Cunha A.F."/>
            <person name="Fenille R.C."/>
            <person name="Ferro J.A."/>
            <person name="Formighieri E.F."/>
            <person name="Kishi L.T."/>
            <person name="Leoni S.G."/>
            <person name="Oliveira A.R."/>
            <person name="Rosa V.E. Jr."/>
            <person name="Sassaki F.T."/>
            <person name="Sena J.A.D."/>
            <person name="de Souza A.A."/>
            <person name="Truffi D."/>
            <person name="Tsukumo F."/>
            <person name="Yanai G.M."/>
            <person name="Zaros L.G."/>
            <person name="Civerolo E.L."/>
            <person name="Simpson A.J.G."/>
            <person name="Almeida N.F. Jr."/>
            <person name="Setubal J.C."/>
            <person name="Kitajima J.P."/>
        </authorList>
    </citation>
    <scope>NUCLEOTIDE SEQUENCE [LARGE SCALE GENOMIC DNA]</scope>
    <source>
        <strain>Temecula1 / ATCC 700964</strain>
    </source>
</reference>
<accession>Q87E64</accession>
<protein>
    <recommendedName>
        <fullName evidence="1">Large ribosomal subunit protein uL30</fullName>
    </recommendedName>
    <alternativeName>
        <fullName evidence="2">50S ribosomal protein L30</fullName>
    </alternativeName>
</protein>
<comment type="subunit">
    <text evidence="1">Part of the 50S ribosomal subunit.</text>
</comment>
<comment type="similarity">
    <text evidence="1">Belongs to the universal ribosomal protein uL30 family.</text>
</comment>
<comment type="sequence caution" evidence="2">
    <conflict type="erroneous initiation">
        <sequence resource="EMBL-CDS" id="AAO28334"/>
    </conflict>
</comment>
<organism>
    <name type="scientific">Xylella fastidiosa (strain Temecula1 / ATCC 700964)</name>
    <dbReference type="NCBI Taxonomy" id="183190"/>
    <lineage>
        <taxon>Bacteria</taxon>
        <taxon>Pseudomonadati</taxon>
        <taxon>Pseudomonadota</taxon>
        <taxon>Gammaproteobacteria</taxon>
        <taxon>Lysobacterales</taxon>
        <taxon>Lysobacteraceae</taxon>
        <taxon>Xylella</taxon>
    </lineage>
</organism>
<sequence length="63" mass="7240">MVHEYDKTLKVCLVRSLIGVPSRHRLSVRALGLSKVSDMRKVNDTPQVRGLINKVHYLVRIQD</sequence>
<evidence type="ECO:0000255" key="1">
    <source>
        <dbReference type="HAMAP-Rule" id="MF_01371"/>
    </source>
</evidence>
<evidence type="ECO:0000305" key="2"/>
<keyword id="KW-1185">Reference proteome</keyword>
<keyword id="KW-0687">Ribonucleoprotein</keyword>
<keyword id="KW-0689">Ribosomal protein</keyword>
<dbReference type="EMBL" id="AE009442">
    <property type="protein sequence ID" value="AAO28334.1"/>
    <property type="status" value="ALT_INIT"/>
    <property type="molecule type" value="Genomic_DNA"/>
</dbReference>
<dbReference type="RefSeq" id="WP_012382464.1">
    <property type="nucleotide sequence ID" value="NC_004556.1"/>
</dbReference>
<dbReference type="SMR" id="Q87E64"/>
<dbReference type="GeneID" id="93904157"/>
<dbReference type="KEGG" id="xft:PD_0455"/>
<dbReference type="HOGENOM" id="CLU_131047_1_4_6"/>
<dbReference type="Proteomes" id="UP000002516">
    <property type="component" value="Chromosome"/>
</dbReference>
<dbReference type="GO" id="GO:0022625">
    <property type="term" value="C:cytosolic large ribosomal subunit"/>
    <property type="evidence" value="ECO:0007669"/>
    <property type="project" value="TreeGrafter"/>
</dbReference>
<dbReference type="GO" id="GO:0003735">
    <property type="term" value="F:structural constituent of ribosome"/>
    <property type="evidence" value="ECO:0007669"/>
    <property type="project" value="InterPro"/>
</dbReference>
<dbReference type="GO" id="GO:0006412">
    <property type="term" value="P:translation"/>
    <property type="evidence" value="ECO:0007669"/>
    <property type="project" value="UniProtKB-UniRule"/>
</dbReference>
<dbReference type="CDD" id="cd01658">
    <property type="entry name" value="Ribosomal_L30"/>
    <property type="match status" value="1"/>
</dbReference>
<dbReference type="Gene3D" id="3.30.1390.20">
    <property type="entry name" value="Ribosomal protein L30, ferredoxin-like fold domain"/>
    <property type="match status" value="1"/>
</dbReference>
<dbReference type="HAMAP" id="MF_01371_B">
    <property type="entry name" value="Ribosomal_uL30_B"/>
    <property type="match status" value="1"/>
</dbReference>
<dbReference type="InterPro" id="IPR036919">
    <property type="entry name" value="Ribo_uL30_ferredoxin-like_sf"/>
</dbReference>
<dbReference type="InterPro" id="IPR005996">
    <property type="entry name" value="Ribosomal_uL30_bac-type"/>
</dbReference>
<dbReference type="InterPro" id="IPR016082">
    <property type="entry name" value="Ribosomal_uL30_ferredoxin-like"/>
</dbReference>
<dbReference type="NCBIfam" id="TIGR01308">
    <property type="entry name" value="rpmD_bact"/>
    <property type="match status" value="1"/>
</dbReference>
<dbReference type="PANTHER" id="PTHR15892:SF2">
    <property type="entry name" value="LARGE RIBOSOMAL SUBUNIT PROTEIN UL30M"/>
    <property type="match status" value="1"/>
</dbReference>
<dbReference type="PANTHER" id="PTHR15892">
    <property type="entry name" value="MITOCHONDRIAL RIBOSOMAL PROTEIN L30"/>
    <property type="match status" value="1"/>
</dbReference>
<dbReference type="Pfam" id="PF00327">
    <property type="entry name" value="Ribosomal_L30"/>
    <property type="match status" value="1"/>
</dbReference>
<dbReference type="PIRSF" id="PIRSF002211">
    <property type="entry name" value="Ribosomal_L30_bac-type"/>
    <property type="match status" value="1"/>
</dbReference>
<dbReference type="SUPFAM" id="SSF55129">
    <property type="entry name" value="Ribosomal protein L30p/L7e"/>
    <property type="match status" value="1"/>
</dbReference>
<gene>
    <name evidence="1" type="primary">rpmD</name>
    <name type="ordered locus">PD_0455</name>
</gene>
<feature type="chain" id="PRO_0000273895" description="Large ribosomal subunit protein uL30">
    <location>
        <begin position="1"/>
        <end position="63"/>
    </location>
</feature>